<proteinExistence type="inferred from homology"/>
<dbReference type="EC" id="3.1.2.6" evidence="1"/>
<dbReference type="EMBL" id="AM286415">
    <property type="protein sequence ID" value="CAL11020.1"/>
    <property type="molecule type" value="Genomic_DNA"/>
</dbReference>
<dbReference type="RefSeq" id="WP_005173058.1">
    <property type="nucleotide sequence ID" value="NC_008800.1"/>
</dbReference>
<dbReference type="RefSeq" id="YP_001005257.1">
    <property type="nucleotide sequence ID" value="NC_008800.1"/>
</dbReference>
<dbReference type="SMR" id="A1JKA9"/>
<dbReference type="KEGG" id="yen:YE0919"/>
<dbReference type="PATRIC" id="fig|393305.7.peg.1018"/>
<dbReference type="eggNOG" id="COG0491">
    <property type="taxonomic scope" value="Bacteria"/>
</dbReference>
<dbReference type="HOGENOM" id="CLU_030571_4_1_6"/>
<dbReference type="OrthoDB" id="9802248at2"/>
<dbReference type="UniPathway" id="UPA00619">
    <property type="reaction ID" value="UER00676"/>
</dbReference>
<dbReference type="Proteomes" id="UP000000642">
    <property type="component" value="Chromosome"/>
</dbReference>
<dbReference type="GO" id="GO:0004416">
    <property type="term" value="F:hydroxyacylglutathione hydrolase activity"/>
    <property type="evidence" value="ECO:0007669"/>
    <property type="project" value="UniProtKB-UniRule"/>
</dbReference>
<dbReference type="GO" id="GO:0046872">
    <property type="term" value="F:metal ion binding"/>
    <property type="evidence" value="ECO:0007669"/>
    <property type="project" value="UniProtKB-KW"/>
</dbReference>
<dbReference type="GO" id="GO:0019243">
    <property type="term" value="P:methylglyoxal catabolic process to D-lactate via S-lactoyl-glutathione"/>
    <property type="evidence" value="ECO:0007669"/>
    <property type="project" value="InterPro"/>
</dbReference>
<dbReference type="CDD" id="cd07723">
    <property type="entry name" value="hydroxyacylglutathione_hydrolase_MBL-fold"/>
    <property type="match status" value="1"/>
</dbReference>
<dbReference type="Gene3D" id="3.60.15.10">
    <property type="entry name" value="Ribonuclease Z/Hydroxyacylglutathione hydrolase-like"/>
    <property type="match status" value="1"/>
</dbReference>
<dbReference type="HAMAP" id="MF_01374">
    <property type="entry name" value="Glyoxalase_2"/>
    <property type="match status" value="1"/>
</dbReference>
<dbReference type="InterPro" id="IPR035680">
    <property type="entry name" value="Clx_II_MBL"/>
</dbReference>
<dbReference type="InterPro" id="IPR050110">
    <property type="entry name" value="Glyoxalase_II_hydrolase"/>
</dbReference>
<dbReference type="InterPro" id="IPR032282">
    <property type="entry name" value="HAGH_C"/>
</dbReference>
<dbReference type="InterPro" id="IPR017782">
    <property type="entry name" value="Hydroxyacylglutathione_Hdrlase"/>
</dbReference>
<dbReference type="InterPro" id="IPR001279">
    <property type="entry name" value="Metallo-B-lactamas"/>
</dbReference>
<dbReference type="InterPro" id="IPR036866">
    <property type="entry name" value="RibonucZ/Hydroxyglut_hydro"/>
</dbReference>
<dbReference type="NCBIfam" id="TIGR03413">
    <property type="entry name" value="GSH_gloB"/>
    <property type="match status" value="1"/>
</dbReference>
<dbReference type="PANTHER" id="PTHR43705">
    <property type="entry name" value="HYDROXYACYLGLUTATHIONE HYDROLASE"/>
    <property type="match status" value="1"/>
</dbReference>
<dbReference type="PANTHER" id="PTHR43705:SF1">
    <property type="entry name" value="HYDROXYACYLGLUTATHIONE HYDROLASE GLOB"/>
    <property type="match status" value="1"/>
</dbReference>
<dbReference type="Pfam" id="PF16123">
    <property type="entry name" value="HAGH_C"/>
    <property type="match status" value="1"/>
</dbReference>
<dbReference type="Pfam" id="PF00753">
    <property type="entry name" value="Lactamase_B"/>
    <property type="match status" value="1"/>
</dbReference>
<dbReference type="PIRSF" id="PIRSF005457">
    <property type="entry name" value="Glx"/>
    <property type="match status" value="1"/>
</dbReference>
<dbReference type="SMART" id="SM00849">
    <property type="entry name" value="Lactamase_B"/>
    <property type="match status" value="1"/>
</dbReference>
<dbReference type="SUPFAM" id="SSF56281">
    <property type="entry name" value="Metallo-hydrolase/oxidoreductase"/>
    <property type="match status" value="1"/>
</dbReference>
<gene>
    <name evidence="1" type="primary">gloB</name>
    <name type="ordered locus">YE0919</name>
</gene>
<protein>
    <recommendedName>
        <fullName evidence="1">Hydroxyacylglutathione hydrolase</fullName>
        <ecNumber evidence="1">3.1.2.6</ecNumber>
    </recommendedName>
    <alternativeName>
        <fullName evidence="1">Glyoxalase II</fullName>
        <shortName evidence="1">Glx II</shortName>
    </alternativeName>
</protein>
<name>GLO2_YERE8</name>
<evidence type="ECO:0000255" key="1">
    <source>
        <dbReference type="HAMAP-Rule" id="MF_01374"/>
    </source>
</evidence>
<sequence>MNLISIPAFQDNYIWLLADEQKHCVIVDPGESAPVLAALSQGQYLPQAILLTHHHNDHVGGVADLRRHFPEIPVYGPQETANKGATIMVTGGDHLSIGGQNYQVIAVPGHTLEHIAYYSKPYLFCGDTLFSAGCGRLFEGTPAQMYASIQQLAQLPDETLICSAHEYTLANLKFARFILPSDQDIATYQQQIMQLRAKNQPSLPVKLQIERKINVFLRCDDIDLQRKIGVISPPNSLVSVFSELRAQKDRF</sequence>
<feature type="chain" id="PRO_0000309726" description="Hydroxyacylglutathione hydrolase">
    <location>
        <begin position="1"/>
        <end position="251"/>
    </location>
</feature>
<feature type="binding site" evidence="1">
    <location>
        <position position="53"/>
    </location>
    <ligand>
        <name>Zn(2+)</name>
        <dbReference type="ChEBI" id="CHEBI:29105"/>
        <label>1</label>
    </ligand>
</feature>
<feature type="binding site" evidence="1">
    <location>
        <position position="55"/>
    </location>
    <ligand>
        <name>Zn(2+)</name>
        <dbReference type="ChEBI" id="CHEBI:29105"/>
        <label>1</label>
    </ligand>
</feature>
<feature type="binding site" evidence="1">
    <location>
        <position position="57"/>
    </location>
    <ligand>
        <name>Zn(2+)</name>
        <dbReference type="ChEBI" id="CHEBI:29105"/>
        <label>2</label>
    </ligand>
</feature>
<feature type="binding site" evidence="1">
    <location>
        <position position="58"/>
    </location>
    <ligand>
        <name>Zn(2+)</name>
        <dbReference type="ChEBI" id="CHEBI:29105"/>
        <label>2</label>
    </ligand>
</feature>
<feature type="binding site" evidence="1">
    <location>
        <position position="110"/>
    </location>
    <ligand>
        <name>Zn(2+)</name>
        <dbReference type="ChEBI" id="CHEBI:29105"/>
        <label>1</label>
    </ligand>
</feature>
<feature type="binding site" evidence="1">
    <location>
        <position position="127"/>
    </location>
    <ligand>
        <name>Zn(2+)</name>
        <dbReference type="ChEBI" id="CHEBI:29105"/>
        <label>1</label>
    </ligand>
</feature>
<feature type="binding site" evidence="1">
    <location>
        <position position="127"/>
    </location>
    <ligand>
        <name>Zn(2+)</name>
        <dbReference type="ChEBI" id="CHEBI:29105"/>
        <label>2</label>
    </ligand>
</feature>
<feature type="binding site" evidence="1">
    <location>
        <position position="165"/>
    </location>
    <ligand>
        <name>Zn(2+)</name>
        <dbReference type="ChEBI" id="CHEBI:29105"/>
        <label>2</label>
    </ligand>
</feature>
<keyword id="KW-0378">Hydrolase</keyword>
<keyword id="KW-0479">Metal-binding</keyword>
<keyword id="KW-0862">Zinc</keyword>
<accession>A1JKA9</accession>
<organism>
    <name type="scientific">Yersinia enterocolitica serotype O:8 / biotype 1B (strain NCTC 13174 / 8081)</name>
    <dbReference type="NCBI Taxonomy" id="393305"/>
    <lineage>
        <taxon>Bacteria</taxon>
        <taxon>Pseudomonadati</taxon>
        <taxon>Pseudomonadota</taxon>
        <taxon>Gammaproteobacteria</taxon>
        <taxon>Enterobacterales</taxon>
        <taxon>Yersiniaceae</taxon>
        <taxon>Yersinia</taxon>
    </lineage>
</organism>
<reference key="1">
    <citation type="journal article" date="2006" name="PLoS Genet.">
        <title>The complete genome sequence and comparative genome analysis of the high pathogenicity Yersinia enterocolitica strain 8081.</title>
        <authorList>
            <person name="Thomson N.R."/>
            <person name="Howard S."/>
            <person name="Wren B.W."/>
            <person name="Holden M.T.G."/>
            <person name="Crossman L."/>
            <person name="Challis G.L."/>
            <person name="Churcher C."/>
            <person name="Mungall K."/>
            <person name="Brooks K."/>
            <person name="Chillingworth T."/>
            <person name="Feltwell T."/>
            <person name="Abdellah Z."/>
            <person name="Hauser H."/>
            <person name="Jagels K."/>
            <person name="Maddison M."/>
            <person name="Moule S."/>
            <person name="Sanders M."/>
            <person name="Whitehead S."/>
            <person name="Quail M.A."/>
            <person name="Dougan G."/>
            <person name="Parkhill J."/>
            <person name="Prentice M.B."/>
        </authorList>
    </citation>
    <scope>NUCLEOTIDE SEQUENCE [LARGE SCALE GENOMIC DNA]</scope>
    <source>
        <strain>NCTC 13174 / 8081</strain>
    </source>
</reference>
<comment type="function">
    <text evidence="1">Thiolesterase that catalyzes the hydrolysis of S-D-lactoyl-glutathione to form glutathione and D-lactic acid.</text>
</comment>
<comment type="catalytic activity">
    <reaction evidence="1">
        <text>an S-(2-hydroxyacyl)glutathione + H2O = a 2-hydroxy carboxylate + glutathione + H(+)</text>
        <dbReference type="Rhea" id="RHEA:21864"/>
        <dbReference type="ChEBI" id="CHEBI:15377"/>
        <dbReference type="ChEBI" id="CHEBI:15378"/>
        <dbReference type="ChEBI" id="CHEBI:57925"/>
        <dbReference type="ChEBI" id="CHEBI:58896"/>
        <dbReference type="ChEBI" id="CHEBI:71261"/>
        <dbReference type="EC" id="3.1.2.6"/>
    </reaction>
</comment>
<comment type="cofactor">
    <cofactor evidence="1">
        <name>Zn(2+)</name>
        <dbReference type="ChEBI" id="CHEBI:29105"/>
    </cofactor>
    <text evidence="1">Binds 2 Zn(2+) ions per subunit.</text>
</comment>
<comment type="pathway">
    <text evidence="1">Secondary metabolite metabolism; methylglyoxal degradation; (R)-lactate from methylglyoxal: step 2/2.</text>
</comment>
<comment type="subunit">
    <text evidence="1">Monomer.</text>
</comment>
<comment type="similarity">
    <text evidence="1">Belongs to the metallo-beta-lactamase superfamily. Glyoxalase II family.</text>
</comment>